<accession>Q57J50</accession>
<keyword id="KW-0687">Ribonucleoprotein</keyword>
<keyword id="KW-0689">Ribosomal protein</keyword>
<comment type="subunit">
    <text evidence="1">Part of the 50S ribosomal subunit.</text>
</comment>
<comment type="similarity">
    <text evidence="1">Belongs to the universal ribosomal protein uL30 family.</text>
</comment>
<evidence type="ECO:0000255" key="1">
    <source>
        <dbReference type="HAMAP-Rule" id="MF_01371"/>
    </source>
</evidence>
<evidence type="ECO:0000305" key="2"/>
<feature type="chain" id="PRO_0000273847" description="Large ribosomal subunit protein uL30">
    <location>
        <begin position="1"/>
        <end position="59"/>
    </location>
</feature>
<proteinExistence type="inferred from homology"/>
<gene>
    <name evidence="1" type="primary">rpmD</name>
    <name type="ordered locus">SCH_3356</name>
</gene>
<protein>
    <recommendedName>
        <fullName evidence="1">Large ribosomal subunit protein uL30</fullName>
    </recommendedName>
    <alternativeName>
        <fullName evidence="2">50S ribosomal protein L30</fullName>
    </alternativeName>
</protein>
<name>RL30_SALCH</name>
<reference key="1">
    <citation type="journal article" date="2005" name="Nucleic Acids Res.">
        <title>The genome sequence of Salmonella enterica serovar Choleraesuis, a highly invasive and resistant zoonotic pathogen.</title>
        <authorList>
            <person name="Chiu C.-H."/>
            <person name="Tang P."/>
            <person name="Chu C."/>
            <person name="Hu S."/>
            <person name="Bao Q."/>
            <person name="Yu J."/>
            <person name="Chou Y.-Y."/>
            <person name="Wang H.-S."/>
            <person name="Lee Y.-S."/>
        </authorList>
    </citation>
    <scope>NUCLEOTIDE SEQUENCE [LARGE SCALE GENOMIC DNA]</scope>
    <source>
        <strain>SC-B67</strain>
    </source>
</reference>
<dbReference type="EMBL" id="AE017220">
    <property type="protein sequence ID" value="AAX67262.1"/>
    <property type="molecule type" value="Genomic_DNA"/>
</dbReference>
<dbReference type="RefSeq" id="WP_001140434.1">
    <property type="nucleotide sequence ID" value="NC_006905.1"/>
</dbReference>
<dbReference type="SMR" id="Q57J50"/>
<dbReference type="GeneID" id="97393185"/>
<dbReference type="KEGG" id="sec:SCH_3356"/>
<dbReference type="HOGENOM" id="CLU_131047_1_4_6"/>
<dbReference type="Proteomes" id="UP000000538">
    <property type="component" value="Chromosome"/>
</dbReference>
<dbReference type="GO" id="GO:0022625">
    <property type="term" value="C:cytosolic large ribosomal subunit"/>
    <property type="evidence" value="ECO:0007669"/>
    <property type="project" value="TreeGrafter"/>
</dbReference>
<dbReference type="GO" id="GO:0003735">
    <property type="term" value="F:structural constituent of ribosome"/>
    <property type="evidence" value="ECO:0007669"/>
    <property type="project" value="InterPro"/>
</dbReference>
<dbReference type="GO" id="GO:0006412">
    <property type="term" value="P:translation"/>
    <property type="evidence" value="ECO:0007669"/>
    <property type="project" value="UniProtKB-UniRule"/>
</dbReference>
<dbReference type="CDD" id="cd01658">
    <property type="entry name" value="Ribosomal_L30"/>
    <property type="match status" value="1"/>
</dbReference>
<dbReference type="FunFam" id="3.30.1390.20:FF:000001">
    <property type="entry name" value="50S ribosomal protein L30"/>
    <property type="match status" value="1"/>
</dbReference>
<dbReference type="Gene3D" id="3.30.1390.20">
    <property type="entry name" value="Ribosomal protein L30, ferredoxin-like fold domain"/>
    <property type="match status" value="1"/>
</dbReference>
<dbReference type="HAMAP" id="MF_01371_B">
    <property type="entry name" value="Ribosomal_uL30_B"/>
    <property type="match status" value="1"/>
</dbReference>
<dbReference type="InterPro" id="IPR036919">
    <property type="entry name" value="Ribo_uL30_ferredoxin-like_sf"/>
</dbReference>
<dbReference type="InterPro" id="IPR005996">
    <property type="entry name" value="Ribosomal_uL30_bac-type"/>
</dbReference>
<dbReference type="InterPro" id="IPR018038">
    <property type="entry name" value="Ribosomal_uL30_CS"/>
</dbReference>
<dbReference type="InterPro" id="IPR016082">
    <property type="entry name" value="Ribosomal_uL30_ferredoxin-like"/>
</dbReference>
<dbReference type="NCBIfam" id="TIGR01308">
    <property type="entry name" value="rpmD_bact"/>
    <property type="match status" value="1"/>
</dbReference>
<dbReference type="PANTHER" id="PTHR15892:SF2">
    <property type="entry name" value="LARGE RIBOSOMAL SUBUNIT PROTEIN UL30M"/>
    <property type="match status" value="1"/>
</dbReference>
<dbReference type="PANTHER" id="PTHR15892">
    <property type="entry name" value="MITOCHONDRIAL RIBOSOMAL PROTEIN L30"/>
    <property type="match status" value="1"/>
</dbReference>
<dbReference type="Pfam" id="PF00327">
    <property type="entry name" value="Ribosomal_L30"/>
    <property type="match status" value="1"/>
</dbReference>
<dbReference type="PIRSF" id="PIRSF002211">
    <property type="entry name" value="Ribosomal_L30_bac-type"/>
    <property type="match status" value="1"/>
</dbReference>
<dbReference type="SUPFAM" id="SSF55129">
    <property type="entry name" value="Ribosomal protein L30p/L7e"/>
    <property type="match status" value="1"/>
</dbReference>
<dbReference type="PROSITE" id="PS00634">
    <property type="entry name" value="RIBOSOMAL_L30"/>
    <property type="match status" value="1"/>
</dbReference>
<sequence>MAKTIKITQTRSAIGRLPKHKATLLGLGLRRIGHTVEREDTPAVRGMVNAVSFMVKVEE</sequence>
<organism>
    <name type="scientific">Salmonella choleraesuis (strain SC-B67)</name>
    <dbReference type="NCBI Taxonomy" id="321314"/>
    <lineage>
        <taxon>Bacteria</taxon>
        <taxon>Pseudomonadati</taxon>
        <taxon>Pseudomonadota</taxon>
        <taxon>Gammaproteobacteria</taxon>
        <taxon>Enterobacterales</taxon>
        <taxon>Enterobacteriaceae</taxon>
        <taxon>Salmonella</taxon>
    </lineage>
</organism>